<comment type="function">
    <text evidence="1">With S4 and S12 plays an important role in translational accuracy.</text>
</comment>
<comment type="function">
    <text evidence="1">Located at the back of the 30S subunit body where it stabilizes the conformation of the head with respect to the body.</text>
</comment>
<comment type="subunit">
    <text evidence="1">Part of the 30S ribosomal subunit. Contacts proteins S4 and S8.</text>
</comment>
<comment type="domain">
    <text>The N-terminal domain interacts with the head of the 30S subunit; the C-terminal domain interacts with the body and contacts protein S4. The interaction surface between S4 and S5 is involved in control of translational fidelity.</text>
</comment>
<comment type="similarity">
    <text evidence="1">Belongs to the universal ribosomal protein uS5 family.</text>
</comment>
<proteinExistence type="inferred from homology"/>
<sequence length="211" mass="22670">MPGRERRDGGRSADDNKQNDRNERRGGGRRDDRRNQQQDERSQYIERVVTINRVSKVVKGGRRFSFTALVIVGDGKGMVGVGYGKAKEVPAAIQKGAEEARKNFFRVPMVNGTITHPVQGEKAAGIVMLKPAAPGTGVIAGGAARPVLECAGIQDILSKSLGSDNAINVVHATVDGLKQLVRPEEVAARRGKTIEEVAPARILRARAGQEA</sequence>
<evidence type="ECO:0000255" key="1">
    <source>
        <dbReference type="HAMAP-Rule" id="MF_01307"/>
    </source>
</evidence>
<evidence type="ECO:0000256" key="2">
    <source>
        <dbReference type="SAM" id="MobiDB-lite"/>
    </source>
</evidence>
<evidence type="ECO:0000305" key="3"/>
<dbReference type="EMBL" id="AP009044">
    <property type="protein sequence ID" value="BAF53610.1"/>
    <property type="molecule type" value="Genomic_DNA"/>
</dbReference>
<dbReference type="RefSeq" id="WP_003854347.1">
    <property type="nucleotide sequence ID" value="NC_009342.1"/>
</dbReference>
<dbReference type="SMR" id="A4QBL3"/>
<dbReference type="GeneID" id="1021540"/>
<dbReference type="KEGG" id="cgt:cgR_0639"/>
<dbReference type="HOGENOM" id="CLU_065898_1_0_11"/>
<dbReference type="PhylomeDB" id="A4QBL3"/>
<dbReference type="Proteomes" id="UP000006698">
    <property type="component" value="Chromosome"/>
</dbReference>
<dbReference type="GO" id="GO:0015935">
    <property type="term" value="C:small ribosomal subunit"/>
    <property type="evidence" value="ECO:0007669"/>
    <property type="project" value="InterPro"/>
</dbReference>
<dbReference type="GO" id="GO:0019843">
    <property type="term" value="F:rRNA binding"/>
    <property type="evidence" value="ECO:0007669"/>
    <property type="project" value="UniProtKB-UniRule"/>
</dbReference>
<dbReference type="GO" id="GO:0003735">
    <property type="term" value="F:structural constituent of ribosome"/>
    <property type="evidence" value="ECO:0007669"/>
    <property type="project" value="InterPro"/>
</dbReference>
<dbReference type="GO" id="GO:0006412">
    <property type="term" value="P:translation"/>
    <property type="evidence" value="ECO:0007669"/>
    <property type="project" value="UniProtKB-UniRule"/>
</dbReference>
<dbReference type="FunFam" id="3.30.160.20:FF:000001">
    <property type="entry name" value="30S ribosomal protein S5"/>
    <property type="match status" value="1"/>
</dbReference>
<dbReference type="FunFam" id="3.30.230.10:FF:000002">
    <property type="entry name" value="30S ribosomal protein S5"/>
    <property type="match status" value="1"/>
</dbReference>
<dbReference type="Gene3D" id="3.30.160.20">
    <property type="match status" value="1"/>
</dbReference>
<dbReference type="Gene3D" id="3.30.230.10">
    <property type="match status" value="1"/>
</dbReference>
<dbReference type="HAMAP" id="MF_01307_B">
    <property type="entry name" value="Ribosomal_uS5_B"/>
    <property type="match status" value="1"/>
</dbReference>
<dbReference type="InterPro" id="IPR020568">
    <property type="entry name" value="Ribosomal_Su5_D2-typ_SF"/>
</dbReference>
<dbReference type="InterPro" id="IPR000851">
    <property type="entry name" value="Ribosomal_uS5"/>
</dbReference>
<dbReference type="InterPro" id="IPR005712">
    <property type="entry name" value="Ribosomal_uS5_bac-type"/>
</dbReference>
<dbReference type="InterPro" id="IPR005324">
    <property type="entry name" value="Ribosomal_uS5_C"/>
</dbReference>
<dbReference type="InterPro" id="IPR013810">
    <property type="entry name" value="Ribosomal_uS5_N"/>
</dbReference>
<dbReference type="InterPro" id="IPR018192">
    <property type="entry name" value="Ribosomal_uS5_N_CS"/>
</dbReference>
<dbReference type="InterPro" id="IPR014721">
    <property type="entry name" value="Ribsml_uS5_D2-typ_fold_subgr"/>
</dbReference>
<dbReference type="NCBIfam" id="TIGR01021">
    <property type="entry name" value="rpsE_bact"/>
    <property type="match status" value="1"/>
</dbReference>
<dbReference type="PANTHER" id="PTHR48277">
    <property type="entry name" value="MITOCHONDRIAL RIBOSOMAL PROTEIN S5"/>
    <property type="match status" value="1"/>
</dbReference>
<dbReference type="PANTHER" id="PTHR48277:SF1">
    <property type="entry name" value="MITOCHONDRIAL RIBOSOMAL PROTEIN S5"/>
    <property type="match status" value="1"/>
</dbReference>
<dbReference type="Pfam" id="PF00333">
    <property type="entry name" value="Ribosomal_S5"/>
    <property type="match status" value="1"/>
</dbReference>
<dbReference type="Pfam" id="PF03719">
    <property type="entry name" value="Ribosomal_S5_C"/>
    <property type="match status" value="1"/>
</dbReference>
<dbReference type="SUPFAM" id="SSF54768">
    <property type="entry name" value="dsRNA-binding domain-like"/>
    <property type="match status" value="1"/>
</dbReference>
<dbReference type="SUPFAM" id="SSF54211">
    <property type="entry name" value="Ribosomal protein S5 domain 2-like"/>
    <property type="match status" value="1"/>
</dbReference>
<dbReference type="PROSITE" id="PS00585">
    <property type="entry name" value="RIBOSOMAL_S5"/>
    <property type="match status" value="1"/>
</dbReference>
<dbReference type="PROSITE" id="PS50881">
    <property type="entry name" value="S5_DSRBD"/>
    <property type="match status" value="1"/>
</dbReference>
<keyword id="KW-0687">Ribonucleoprotein</keyword>
<keyword id="KW-0689">Ribosomal protein</keyword>
<keyword id="KW-0694">RNA-binding</keyword>
<keyword id="KW-0699">rRNA-binding</keyword>
<organism>
    <name type="scientific">Corynebacterium glutamicum (strain R)</name>
    <dbReference type="NCBI Taxonomy" id="340322"/>
    <lineage>
        <taxon>Bacteria</taxon>
        <taxon>Bacillati</taxon>
        <taxon>Actinomycetota</taxon>
        <taxon>Actinomycetes</taxon>
        <taxon>Mycobacteriales</taxon>
        <taxon>Corynebacteriaceae</taxon>
        <taxon>Corynebacterium</taxon>
    </lineage>
</organism>
<reference key="1">
    <citation type="journal article" date="2007" name="Microbiology">
        <title>Comparative analysis of the Corynebacterium glutamicum group and complete genome sequence of strain R.</title>
        <authorList>
            <person name="Yukawa H."/>
            <person name="Omumasaba C.A."/>
            <person name="Nonaka H."/>
            <person name="Kos P."/>
            <person name="Okai N."/>
            <person name="Suzuki N."/>
            <person name="Suda M."/>
            <person name="Tsuge Y."/>
            <person name="Watanabe J."/>
            <person name="Ikeda Y."/>
            <person name="Vertes A.A."/>
            <person name="Inui M."/>
        </authorList>
    </citation>
    <scope>NUCLEOTIDE SEQUENCE [LARGE SCALE GENOMIC DNA]</scope>
    <source>
        <strain>R</strain>
    </source>
</reference>
<feature type="chain" id="PRO_1000086001" description="Small ribosomal subunit protein uS5">
    <location>
        <begin position="1"/>
        <end position="211"/>
    </location>
</feature>
<feature type="domain" description="S5 DRBM" evidence="1">
    <location>
        <begin position="44"/>
        <end position="107"/>
    </location>
</feature>
<feature type="region of interest" description="Disordered" evidence="2">
    <location>
        <begin position="1"/>
        <end position="41"/>
    </location>
</feature>
<name>RS5_CORGB</name>
<protein>
    <recommendedName>
        <fullName evidence="1">Small ribosomal subunit protein uS5</fullName>
    </recommendedName>
    <alternativeName>
        <fullName evidence="3">30S ribosomal protein S5</fullName>
    </alternativeName>
</protein>
<accession>A4QBL3</accession>
<gene>
    <name evidence="1" type="primary">rpsE</name>
    <name type="ordered locus">cgR_0639</name>
</gene>